<comment type="function">
    <text evidence="1">Probably acts as an electrical shunt for an outwardly-directed proton pump that is linked to amino acid decarboxylation, as part of the extreme acid resistance (XAR) response.</text>
</comment>
<comment type="subcellular location">
    <subcellularLocation>
        <location evidence="1">Cell inner membrane</location>
        <topology evidence="1">Multi-pass membrane protein</topology>
    </subcellularLocation>
</comment>
<comment type="similarity">
    <text evidence="1">Belongs to the chloride channel (TC 2.A.49) family. ClcB subfamily.</text>
</comment>
<dbReference type="EMBL" id="CP001144">
    <property type="protein sequence ID" value="ACH78060.1"/>
    <property type="molecule type" value="Genomic_DNA"/>
</dbReference>
<dbReference type="SMR" id="B5FHR3"/>
<dbReference type="KEGG" id="sed:SeD_A1849"/>
<dbReference type="HOGENOM" id="CLU_015263_5_2_6"/>
<dbReference type="Proteomes" id="UP000008322">
    <property type="component" value="Chromosome"/>
</dbReference>
<dbReference type="GO" id="GO:0034707">
    <property type="term" value="C:chloride channel complex"/>
    <property type="evidence" value="ECO:0007669"/>
    <property type="project" value="UniProtKB-KW"/>
</dbReference>
<dbReference type="GO" id="GO:0005886">
    <property type="term" value="C:plasma membrane"/>
    <property type="evidence" value="ECO:0007669"/>
    <property type="project" value="UniProtKB-SubCell"/>
</dbReference>
<dbReference type="GO" id="GO:0005247">
    <property type="term" value="F:voltage-gated chloride channel activity"/>
    <property type="evidence" value="ECO:0007669"/>
    <property type="project" value="UniProtKB-UniRule"/>
</dbReference>
<dbReference type="GO" id="GO:0010447">
    <property type="term" value="P:response to acidic pH"/>
    <property type="evidence" value="ECO:0007669"/>
    <property type="project" value="InterPro"/>
</dbReference>
<dbReference type="CDD" id="cd00400">
    <property type="entry name" value="Voltage_gated_ClC"/>
    <property type="match status" value="1"/>
</dbReference>
<dbReference type="FunFam" id="1.10.3080.10:FF:000010">
    <property type="entry name" value="Voltage-gated ClC-type chloride channel ClcB"/>
    <property type="match status" value="1"/>
</dbReference>
<dbReference type="Gene3D" id="1.10.3080.10">
    <property type="entry name" value="Clc chloride channel"/>
    <property type="match status" value="1"/>
</dbReference>
<dbReference type="HAMAP" id="MF_01203">
    <property type="entry name" value="CLC_ClcB"/>
    <property type="match status" value="1"/>
</dbReference>
<dbReference type="InterPro" id="IPR014743">
    <property type="entry name" value="Cl-channel_core"/>
</dbReference>
<dbReference type="InterPro" id="IPR023790">
    <property type="entry name" value="Cl-channel_volt-gated_ClcB"/>
</dbReference>
<dbReference type="InterPro" id="IPR001807">
    <property type="entry name" value="ClC"/>
</dbReference>
<dbReference type="InterPro" id="IPR050368">
    <property type="entry name" value="ClC-type_chloride_channel"/>
</dbReference>
<dbReference type="NCBIfam" id="NF002437">
    <property type="entry name" value="PRK01610.1"/>
    <property type="match status" value="1"/>
</dbReference>
<dbReference type="PANTHER" id="PTHR43427">
    <property type="entry name" value="CHLORIDE CHANNEL PROTEIN CLC-E"/>
    <property type="match status" value="1"/>
</dbReference>
<dbReference type="PANTHER" id="PTHR43427:SF6">
    <property type="entry name" value="CHLORIDE CHANNEL PROTEIN CLC-E"/>
    <property type="match status" value="1"/>
</dbReference>
<dbReference type="Pfam" id="PF00654">
    <property type="entry name" value="Voltage_CLC"/>
    <property type="match status" value="1"/>
</dbReference>
<dbReference type="PRINTS" id="PR00762">
    <property type="entry name" value="CLCHANNEL"/>
</dbReference>
<dbReference type="SUPFAM" id="SSF81340">
    <property type="entry name" value="Clc chloride channel"/>
    <property type="match status" value="1"/>
</dbReference>
<organism>
    <name type="scientific">Salmonella dublin (strain CT_02021853)</name>
    <dbReference type="NCBI Taxonomy" id="439851"/>
    <lineage>
        <taxon>Bacteria</taxon>
        <taxon>Pseudomonadati</taxon>
        <taxon>Pseudomonadota</taxon>
        <taxon>Gammaproteobacteria</taxon>
        <taxon>Enterobacterales</taxon>
        <taxon>Enterobacteriaceae</taxon>
        <taxon>Salmonella</taxon>
    </lineage>
</organism>
<protein>
    <recommendedName>
        <fullName evidence="1">Voltage-gated ClC-type chloride channel ClcB</fullName>
    </recommendedName>
</protein>
<sequence>MFRRLLIATLIGILAALAVAAFRHAMQLLEWIFLSNDTGSLVNAAEGLSPWRRLITPALGGLAAGLLLWGWQKMNQQRPHAPTDYMEALQTDGQFDVGASLVKSLASLLVVVSGSAIGREGAMILLAALAASSFARRFTPREEWKLWIASGAAAGMAGAYHAPLAGSLFIAEILFGTLMLASLGPVVVSAVVALLTTHLLNGSDSLLYTVHLTVDLHAREYVMIVSTGLVAGLCGPLLMWLMTASHNSFLRLKLSPPWQLALGGLIVGLLSLLTPTVWGNGYSVVQSFLLSPPLFSLIGGIFACKILAVLASSGSGAPGGVFTPTLFVGLSIGMFLGRIWGFWLPGSDEIAILLGLAGMATLLAATTHAPIMSTLMICEMTGEYQLLPGLLIACVVASVLSRTLRHDSIYRQHAAEH</sequence>
<accession>B5FHR3</accession>
<proteinExistence type="inferred from homology"/>
<gene>
    <name evidence="1" type="primary">clcB</name>
    <name type="ordered locus">SeD_A1849</name>
</gene>
<feature type="chain" id="PRO_1000138686" description="Voltage-gated ClC-type chloride channel ClcB">
    <location>
        <begin position="1"/>
        <end position="417"/>
    </location>
</feature>
<feature type="transmembrane region" description="Helical" evidence="1">
    <location>
        <begin position="5"/>
        <end position="25"/>
    </location>
</feature>
<feature type="transmembrane region" description="Helical" evidence="1">
    <location>
        <begin position="54"/>
        <end position="74"/>
    </location>
</feature>
<feature type="transmembrane region" description="Helical" evidence="1">
    <location>
        <begin position="146"/>
        <end position="166"/>
    </location>
</feature>
<feature type="transmembrane region" description="Helical" evidence="1">
    <location>
        <begin position="168"/>
        <end position="188"/>
    </location>
</feature>
<feature type="transmembrane region" description="Helical" evidence="1">
    <location>
        <begin position="222"/>
        <end position="242"/>
    </location>
</feature>
<feature type="transmembrane region" description="Helical" evidence="1">
    <location>
        <begin position="258"/>
        <end position="278"/>
    </location>
</feature>
<feature type="transmembrane region" description="Helical" evidence="1">
    <location>
        <begin position="288"/>
        <end position="308"/>
    </location>
</feature>
<feature type="transmembrane region" description="Helical" evidence="1">
    <location>
        <begin position="316"/>
        <end position="336"/>
    </location>
</feature>
<feature type="transmembrane region" description="Helical" evidence="1">
    <location>
        <begin position="349"/>
        <end position="371"/>
    </location>
</feature>
<feature type="transmembrane region" description="Helical" evidence="1">
    <location>
        <begin position="380"/>
        <end position="400"/>
    </location>
</feature>
<name>CLCB_SALDC</name>
<keyword id="KW-0997">Cell inner membrane</keyword>
<keyword id="KW-1003">Cell membrane</keyword>
<keyword id="KW-0868">Chloride</keyword>
<keyword id="KW-0869">Chloride channel</keyword>
<keyword id="KW-0407">Ion channel</keyword>
<keyword id="KW-0406">Ion transport</keyword>
<keyword id="KW-0472">Membrane</keyword>
<keyword id="KW-0812">Transmembrane</keyword>
<keyword id="KW-1133">Transmembrane helix</keyword>
<keyword id="KW-0813">Transport</keyword>
<keyword id="KW-0851">Voltage-gated channel</keyword>
<reference key="1">
    <citation type="journal article" date="2011" name="J. Bacteriol.">
        <title>Comparative genomics of 28 Salmonella enterica isolates: evidence for CRISPR-mediated adaptive sublineage evolution.</title>
        <authorList>
            <person name="Fricke W.F."/>
            <person name="Mammel M.K."/>
            <person name="McDermott P.F."/>
            <person name="Tartera C."/>
            <person name="White D.G."/>
            <person name="Leclerc J.E."/>
            <person name="Ravel J."/>
            <person name="Cebula T.A."/>
        </authorList>
    </citation>
    <scope>NUCLEOTIDE SEQUENCE [LARGE SCALE GENOMIC DNA]</scope>
    <source>
        <strain>CT_02021853</strain>
    </source>
</reference>
<evidence type="ECO:0000255" key="1">
    <source>
        <dbReference type="HAMAP-Rule" id="MF_01203"/>
    </source>
</evidence>